<name>YWLF_BACSU</name>
<reference key="1">
    <citation type="submission" date="1994-10" db="EMBL/GenBank/DDBJ databases">
        <authorList>
            <person name="Glaser P."/>
            <person name="Danchin A."/>
        </authorList>
    </citation>
    <scope>NUCLEOTIDE SEQUENCE [GENOMIC DNA]</scope>
    <source>
        <strain>168</strain>
    </source>
</reference>
<reference key="2">
    <citation type="journal article" date="1997" name="Nature">
        <title>The complete genome sequence of the Gram-positive bacterium Bacillus subtilis.</title>
        <authorList>
            <person name="Kunst F."/>
            <person name="Ogasawara N."/>
            <person name="Moszer I."/>
            <person name="Albertini A.M."/>
            <person name="Alloni G."/>
            <person name="Azevedo V."/>
            <person name="Bertero M.G."/>
            <person name="Bessieres P."/>
            <person name="Bolotin A."/>
            <person name="Borchert S."/>
            <person name="Borriss R."/>
            <person name="Boursier L."/>
            <person name="Brans A."/>
            <person name="Braun M."/>
            <person name="Brignell S.C."/>
            <person name="Bron S."/>
            <person name="Brouillet S."/>
            <person name="Bruschi C.V."/>
            <person name="Caldwell B."/>
            <person name="Capuano V."/>
            <person name="Carter N.M."/>
            <person name="Choi S.-K."/>
            <person name="Codani J.-J."/>
            <person name="Connerton I.F."/>
            <person name="Cummings N.J."/>
            <person name="Daniel R.A."/>
            <person name="Denizot F."/>
            <person name="Devine K.M."/>
            <person name="Duesterhoeft A."/>
            <person name="Ehrlich S.D."/>
            <person name="Emmerson P.T."/>
            <person name="Entian K.-D."/>
            <person name="Errington J."/>
            <person name="Fabret C."/>
            <person name="Ferrari E."/>
            <person name="Foulger D."/>
            <person name="Fritz C."/>
            <person name="Fujita M."/>
            <person name="Fujita Y."/>
            <person name="Fuma S."/>
            <person name="Galizzi A."/>
            <person name="Galleron N."/>
            <person name="Ghim S.-Y."/>
            <person name="Glaser P."/>
            <person name="Goffeau A."/>
            <person name="Golightly E.J."/>
            <person name="Grandi G."/>
            <person name="Guiseppi G."/>
            <person name="Guy B.J."/>
            <person name="Haga K."/>
            <person name="Haiech J."/>
            <person name="Harwood C.R."/>
            <person name="Henaut A."/>
            <person name="Hilbert H."/>
            <person name="Holsappel S."/>
            <person name="Hosono S."/>
            <person name="Hullo M.-F."/>
            <person name="Itaya M."/>
            <person name="Jones L.-M."/>
            <person name="Joris B."/>
            <person name="Karamata D."/>
            <person name="Kasahara Y."/>
            <person name="Klaerr-Blanchard M."/>
            <person name="Klein C."/>
            <person name="Kobayashi Y."/>
            <person name="Koetter P."/>
            <person name="Koningstein G."/>
            <person name="Krogh S."/>
            <person name="Kumano M."/>
            <person name="Kurita K."/>
            <person name="Lapidus A."/>
            <person name="Lardinois S."/>
            <person name="Lauber J."/>
            <person name="Lazarevic V."/>
            <person name="Lee S.-M."/>
            <person name="Levine A."/>
            <person name="Liu H."/>
            <person name="Masuda S."/>
            <person name="Mauel C."/>
            <person name="Medigue C."/>
            <person name="Medina N."/>
            <person name="Mellado R.P."/>
            <person name="Mizuno M."/>
            <person name="Moestl D."/>
            <person name="Nakai S."/>
            <person name="Noback M."/>
            <person name="Noone D."/>
            <person name="O'Reilly M."/>
            <person name="Ogawa K."/>
            <person name="Ogiwara A."/>
            <person name="Oudega B."/>
            <person name="Park S.-H."/>
            <person name="Parro V."/>
            <person name="Pohl T.M."/>
            <person name="Portetelle D."/>
            <person name="Porwollik S."/>
            <person name="Prescott A.M."/>
            <person name="Presecan E."/>
            <person name="Pujic P."/>
            <person name="Purnelle B."/>
            <person name="Rapoport G."/>
            <person name="Rey M."/>
            <person name="Reynolds S."/>
            <person name="Rieger M."/>
            <person name="Rivolta C."/>
            <person name="Rocha E."/>
            <person name="Roche B."/>
            <person name="Rose M."/>
            <person name="Sadaie Y."/>
            <person name="Sato T."/>
            <person name="Scanlan E."/>
            <person name="Schleich S."/>
            <person name="Schroeter R."/>
            <person name="Scoffone F."/>
            <person name="Sekiguchi J."/>
            <person name="Sekowska A."/>
            <person name="Seror S.J."/>
            <person name="Serror P."/>
            <person name="Shin B.-S."/>
            <person name="Soldo B."/>
            <person name="Sorokin A."/>
            <person name="Tacconi E."/>
            <person name="Takagi T."/>
            <person name="Takahashi H."/>
            <person name="Takemaru K."/>
            <person name="Takeuchi M."/>
            <person name="Tamakoshi A."/>
            <person name="Tanaka T."/>
            <person name="Terpstra P."/>
            <person name="Tognoni A."/>
            <person name="Tosato V."/>
            <person name="Uchiyama S."/>
            <person name="Vandenbol M."/>
            <person name="Vannier F."/>
            <person name="Vassarotti A."/>
            <person name="Viari A."/>
            <person name="Wambutt R."/>
            <person name="Wedler E."/>
            <person name="Wedler H."/>
            <person name="Weitzenegger T."/>
            <person name="Winters P."/>
            <person name="Wipat A."/>
            <person name="Yamamoto H."/>
            <person name="Yamane K."/>
            <person name="Yasumoto K."/>
            <person name="Yata K."/>
            <person name="Yoshida K."/>
            <person name="Yoshikawa H.-F."/>
            <person name="Zumstein E."/>
            <person name="Yoshikawa H."/>
            <person name="Danchin A."/>
        </authorList>
    </citation>
    <scope>NUCLEOTIDE SEQUENCE [LARGE SCALE GENOMIC DNA]</scope>
    <source>
        <strain>168</strain>
    </source>
</reference>
<reference key="3">
    <citation type="journal article" date="2003" name="Mol. Microbiol.">
        <title>Identification of additional TnrA-regulated genes of Bacillus subtilis associated with a TnrA box.</title>
        <authorList>
            <person name="Yoshida K."/>
            <person name="Yamaguchi H."/>
            <person name="Kinehara M."/>
            <person name="Ohki Y.-H."/>
            <person name="Nakaura Y."/>
            <person name="Fujita Y."/>
        </authorList>
    </citation>
    <scope>REGULATION BY TNRA</scope>
</reference>
<feature type="chain" id="PRO_0000208164" description="Putative sugar phosphate isomerase YwlF">
    <location>
        <begin position="1"/>
        <end position="149"/>
    </location>
</feature>
<feature type="active site" description="Proton acceptor" evidence="1">
    <location>
        <position position="66"/>
    </location>
</feature>
<feature type="active site" description="Proton donor" evidence="2">
    <location>
        <position position="99"/>
    </location>
</feature>
<feature type="binding site" evidence="1">
    <location>
        <position position="9"/>
    </location>
    <ligand>
        <name>substrate</name>
    </ligand>
</feature>
<feature type="binding site" evidence="1">
    <location>
        <begin position="67"/>
        <end position="72"/>
    </location>
    <ligand>
        <name>substrate</name>
    </ligand>
</feature>
<feature type="binding site" evidence="1">
    <location>
        <position position="133"/>
    </location>
    <ligand>
        <name>substrate</name>
    </ligand>
</feature>
<protein>
    <recommendedName>
        <fullName>Putative sugar phosphate isomerase YwlF</fullName>
        <ecNumber>5.3.1.-</ecNumber>
    </recommendedName>
</protein>
<proteinExistence type="evidence at transcript level"/>
<accession>P39156</accession>
<organism>
    <name type="scientific">Bacillus subtilis (strain 168)</name>
    <dbReference type="NCBI Taxonomy" id="224308"/>
    <lineage>
        <taxon>Bacteria</taxon>
        <taxon>Bacillati</taxon>
        <taxon>Bacillota</taxon>
        <taxon>Bacilli</taxon>
        <taxon>Bacillales</taxon>
        <taxon>Bacillaceae</taxon>
        <taxon>Bacillus</taxon>
    </lineage>
</organism>
<keyword id="KW-0413">Isomerase</keyword>
<keyword id="KW-1185">Reference proteome</keyword>
<sequence length="149" mass="16210">MKVAIASDHGGVHIRNEIKELMDELQIEYIDMGCDCGSGSVDYPDYAFPVAEKVVSGEVDRGILICGTGIGMSISANKVKGIRCALAHDTFSAKATREHNDTNILAMGERVIGPGLAREIAKIWLTTEFTGGRHQTRIGKISDYEEKNL</sequence>
<gene>
    <name type="primary">ywlF</name>
    <name type="ordered locus">BSU36920</name>
    <name type="ORF">ipc-32d</name>
</gene>
<evidence type="ECO:0000250" key="1"/>
<evidence type="ECO:0000255" key="2"/>
<evidence type="ECO:0000305" key="3"/>
<comment type="induction">
    <text>Negatively regulated by TnrA under nitrogen-limited conditions.</text>
</comment>
<comment type="similarity">
    <text evidence="3">Belongs to the LacAB/RpiB family.</text>
</comment>
<dbReference type="EC" id="5.3.1.-"/>
<dbReference type="EMBL" id="Z38002">
    <property type="protein sequence ID" value="CAA86108.1"/>
    <property type="molecule type" value="Genomic_DNA"/>
</dbReference>
<dbReference type="EMBL" id="AL009126">
    <property type="protein sequence ID" value="CAB15709.1"/>
    <property type="molecule type" value="Genomic_DNA"/>
</dbReference>
<dbReference type="PIR" id="I40481">
    <property type="entry name" value="I40481"/>
</dbReference>
<dbReference type="SMR" id="P39156"/>
<dbReference type="FunCoup" id="P39156">
    <property type="interactions" value="340"/>
</dbReference>
<dbReference type="STRING" id="224308.BSU36920"/>
<dbReference type="PaxDb" id="224308-BSU36920"/>
<dbReference type="EnsemblBacteria" id="CAB15709">
    <property type="protein sequence ID" value="CAB15709"/>
    <property type="gene ID" value="BSU_36920"/>
</dbReference>
<dbReference type="GeneID" id="937014"/>
<dbReference type="KEGG" id="bsu:BSU36920"/>
<dbReference type="PATRIC" id="fig|224308.179.peg.3999"/>
<dbReference type="eggNOG" id="COG0698">
    <property type="taxonomic scope" value="Bacteria"/>
</dbReference>
<dbReference type="InParanoid" id="P39156"/>
<dbReference type="OrthoDB" id="1778624at2"/>
<dbReference type="PhylomeDB" id="P39156"/>
<dbReference type="BioCyc" id="BSUB:BSU36920-MONOMER"/>
<dbReference type="Proteomes" id="UP000001570">
    <property type="component" value="Chromosome"/>
</dbReference>
<dbReference type="GO" id="GO:0004751">
    <property type="term" value="F:ribose-5-phosphate isomerase activity"/>
    <property type="evidence" value="ECO:0000318"/>
    <property type="project" value="GO_Central"/>
</dbReference>
<dbReference type="GO" id="GO:0019316">
    <property type="term" value="P:D-allose catabolic process"/>
    <property type="evidence" value="ECO:0000318"/>
    <property type="project" value="GO_Central"/>
</dbReference>
<dbReference type="GO" id="GO:0009052">
    <property type="term" value="P:pentose-phosphate shunt, non-oxidative branch"/>
    <property type="evidence" value="ECO:0000318"/>
    <property type="project" value="GO_Central"/>
</dbReference>
<dbReference type="Gene3D" id="3.40.1400.10">
    <property type="entry name" value="Sugar-phosphate isomerase, RpiB/LacA/LacB"/>
    <property type="match status" value="1"/>
</dbReference>
<dbReference type="InterPro" id="IPR004785">
    <property type="entry name" value="RpiB"/>
</dbReference>
<dbReference type="InterPro" id="IPR003500">
    <property type="entry name" value="RpiB_LacA_LacB"/>
</dbReference>
<dbReference type="InterPro" id="IPR036569">
    <property type="entry name" value="RpiB_LacA_LacB_sf"/>
</dbReference>
<dbReference type="InterPro" id="IPR051812">
    <property type="entry name" value="SPI_LacAB/RpiB"/>
</dbReference>
<dbReference type="NCBIfam" id="NF004051">
    <property type="entry name" value="PRK05571.1"/>
    <property type="match status" value="1"/>
</dbReference>
<dbReference type="NCBIfam" id="TIGR01120">
    <property type="entry name" value="rpiB"/>
    <property type="match status" value="1"/>
</dbReference>
<dbReference type="NCBIfam" id="TIGR00689">
    <property type="entry name" value="rpiB_lacA_lacB"/>
    <property type="match status" value="1"/>
</dbReference>
<dbReference type="PANTHER" id="PTHR43732:SF1">
    <property type="entry name" value="RIBOSE 5-PHOSPHATE ISOMERASE"/>
    <property type="match status" value="1"/>
</dbReference>
<dbReference type="PANTHER" id="PTHR43732">
    <property type="entry name" value="RIBOSE 5-PHOSPHATE ISOMERASE-RELATED"/>
    <property type="match status" value="1"/>
</dbReference>
<dbReference type="Pfam" id="PF02502">
    <property type="entry name" value="LacAB_rpiB"/>
    <property type="match status" value="1"/>
</dbReference>
<dbReference type="PIRSF" id="PIRSF005384">
    <property type="entry name" value="RpiB_LacA_B"/>
    <property type="match status" value="1"/>
</dbReference>
<dbReference type="SUPFAM" id="SSF89623">
    <property type="entry name" value="Ribose/Galactose isomerase RpiB/AlsB"/>
    <property type="match status" value="1"/>
</dbReference>